<organism>
    <name type="scientific">Mus musculus</name>
    <name type="common">Mouse</name>
    <dbReference type="NCBI Taxonomy" id="10090"/>
    <lineage>
        <taxon>Eukaryota</taxon>
        <taxon>Metazoa</taxon>
        <taxon>Chordata</taxon>
        <taxon>Craniata</taxon>
        <taxon>Vertebrata</taxon>
        <taxon>Euteleostomi</taxon>
        <taxon>Mammalia</taxon>
        <taxon>Eutheria</taxon>
        <taxon>Euarchontoglires</taxon>
        <taxon>Glires</taxon>
        <taxon>Rodentia</taxon>
        <taxon>Myomorpha</taxon>
        <taxon>Muroidea</taxon>
        <taxon>Muridae</taxon>
        <taxon>Murinae</taxon>
        <taxon>Mus</taxon>
        <taxon>Mus</taxon>
    </lineage>
</organism>
<comment type="function">
    <text evidence="1 6 7 8 10 12 13">Pseudokinase that plays a key role in TNF-induced necroptosis, a programmed cell death process (PubMed:23835476, PubMed:24012422, PubMed:24019532, PubMed:27321907, PubMed:32200799, PubMed:32296175). Does not have protein kinase activity (PubMed:24012422). Activated following phosphorylation by RIPK3, leading to homotrimerization, localization to the plasma membrane and execution of programmed necrosis characterized by calcium influx and plasma membrane damage (PubMed:23835476, PubMed:24012422, PubMed:24019532, PubMed:27321907). In addition to TNF-induced necroptosis, necroptosis can also take place in the nucleus in response to orthomyxoviruses infection: following ZBP1 activation, which senses double-stranded Z-RNA structures, nuclear RIPK3 catalyzes phosphorylation and activation of MLKL, promoting disruption of the nuclear envelope and leakage of cellular DNA into the cytosol (PubMed:32200799, PubMed:32296175). Binds to highly phosphorylated inositol phosphates such as inositolhexakisphosphate (InsP6) which is essential for its necroptotic function (By similarity).</text>
</comment>
<comment type="activity regulation">
    <text evidence="1">Activated via binding to highly phosphorylated inositol phosphates such as inositolhexakisphosphate (InsP6) which mediates the release of an N-terminal auto-inhibitory region (By similarity). Activation requires not only RIPK3-dependent phosphorylation but also binding to highly phosphorylated inositol phosphates (By similarity).</text>
</comment>
<comment type="subunit">
    <text evidence="1 4 5 7 9 10">Homooligomer (By similarity). Homotrimer; forms homotrimers on necroptosis induction (By similarity). Upon TNF-induced necrosis, forms in complex with PGAM5, RIPK1 and RIPK3 (By similarity). Within this complex, may play a role in the proper targeting of RIPK1-RIPK3 to its downstream effector PGAM5 (By similarity). Interacts with RIPK3; the interaction is direct and promotes its phosphorylation and subsequent activation (PubMed:22265413, PubMed:23612963, PubMed:24012422, PubMed:24095729, PubMed:27321907).</text>
</comment>
<comment type="interaction">
    <interactant intactId="EBI-5401970">
        <id>Q9D2Y4</id>
    </interactant>
    <interactant intactId="EBI-2367423">
        <id>Q9QZL0</id>
        <label>Ripk3</label>
    </interactant>
    <organismsDiffer>false</organismsDiffer>
    <experiments>3</experiments>
</comment>
<comment type="interaction">
    <interactant intactId="EBI-5401970">
        <id>Q9D2Y4</id>
    </interactant>
    <interactant intactId="EBI-299577">
        <id>Q60932</id>
        <label>Vdac1</label>
    </interactant>
    <organismsDiffer>false</organismsDiffer>
    <experiments>2</experiments>
</comment>
<comment type="subcellular location">
    <subcellularLocation>
        <location evidence="12 13">Cytoplasm</location>
    </subcellularLocation>
    <subcellularLocation>
        <location evidence="12">Cell membrane</location>
    </subcellularLocation>
    <subcellularLocation>
        <location evidence="12 13">Nucleus</location>
    </subcellularLocation>
    <text evidence="1 12">Localizes to the cytoplasm and translocates to the plasma membrane on necroptosis induction (By similarity). Localizes to the nucleus in response to orthomyxoviruses infection (PubMed:32200799).</text>
</comment>
<comment type="alternative products">
    <event type="alternative splicing"/>
    <isoform>
        <id>Q9D2Y4-1</id>
        <name evidence="15">1</name>
        <sequence type="displayed"/>
    </isoform>
    <isoform>
        <id>Q9D2Y4-2</id>
        <name evidence="14 15">2</name>
        <sequence type="described" ref="VSP_052132"/>
    </isoform>
</comment>
<comment type="tissue specificity">
    <text evidence="6">Highly expressed in thymus, colon, intestine, liver, spleen and lung. Expressed at much lower level in skeletal muscle, heart and kidney. Not detected in brain.</text>
</comment>
<comment type="domain">
    <text evidence="1">The coiled coil region 2 is responsible for homotrimerization.</text>
</comment>
<comment type="domain">
    <text evidence="7 9">The protein kinase domain is catalytically inactive but contains an unusual pseudoactive site with an interaction between Lys-219 and Gln-343 residues (PubMed:24012422, PubMed:24095729). Upon phosphorylation by RIPK3, undergoes an active conformation (PubMed:24012422, PubMed:24095729).</text>
</comment>
<comment type="PTM">
    <text evidence="1 7 9 12">Phosphorylation by RIPK3 induces a conformational switch that is required for necroptosis (PubMed:24012422, PubMed:24095729, PubMed:32200799). It also induces homotrimerization and localization to the plasma membrane (By similarity).</text>
</comment>
<comment type="disruption phenotype">
    <text evidence="6 7 10 11 12">No visible phenotype: mice are viable, fertile and do not developmental or homeostatic phenotype in the absence of overt stress (PubMed:23835476, PubMed:24012422). However, these mice are resistant to TNF-induced necroptosis (PubMed:23835476, PubMed:24012422). At a modestly lethal dose of influenza A virus (IAV), mice do not display increased rates of mortality (PubMed:27321907, PubMed:32200799). Perinatal lethality observed in Ripk1 knockout mice is rescued in knockout mice lacking both Ripk1 and Mlkl (PubMed:27819681).</text>
</comment>
<comment type="miscellaneous">
    <text evidence="18">In contrast to human protein, not inhibited by necrosulfonamide, because a Trp residue is present instead of a Cys in position 85.</text>
</comment>
<comment type="miscellaneous">
    <text evidence="18">Interaction with RIPK3 is species specific: mouse MLKL only interacts with mouse RIPK3 and not human RIPK3.</text>
</comment>
<comment type="similarity">
    <text evidence="17">Belongs to the protein kinase superfamily.</text>
</comment>
<feature type="chain" id="PRO_0000248240" description="Mixed lineage kinase domain-like protein">
    <location>
        <begin position="1"/>
        <end position="472"/>
    </location>
</feature>
<feature type="domain" description="Protein kinase" evidence="3">
    <location>
        <begin position="192"/>
        <end position="456"/>
    </location>
</feature>
<feature type="region of interest" description="N-terminal bundle and brace (NBB); mediates INSP6 binding" evidence="1">
    <location>
        <begin position="1"/>
        <end position="143"/>
    </location>
</feature>
<feature type="coiled-coil region" evidence="2">
    <location>
        <begin position="61"/>
        <end position="81"/>
    </location>
</feature>
<feature type="coiled-coil region" evidence="2">
    <location>
        <begin position="138"/>
        <end position="229"/>
    </location>
</feature>
<feature type="binding site" evidence="3">
    <location>
        <begin position="198"/>
        <end position="206"/>
    </location>
    <ligand>
        <name>ATP</name>
        <dbReference type="ChEBI" id="CHEBI:30616"/>
    </ligand>
</feature>
<feature type="binding site">
    <location>
        <position position="219"/>
    </location>
    <ligand>
        <name>ATP</name>
        <dbReference type="ChEBI" id="CHEBI:30616"/>
    </ligand>
</feature>
<feature type="modified residue" description="Phosphoserine" evidence="1">
    <location>
        <position position="124"/>
    </location>
</feature>
<feature type="modified residue" description="Phosphoserine; by RIPK3" evidence="7 9">
    <location>
        <position position="345"/>
    </location>
</feature>
<feature type="modified residue" description="Phosphoserine; by RIPK3" evidence="7 9">
    <location>
        <position position="347"/>
    </location>
</feature>
<feature type="modified residue" description="Phosphothreonine; by RIPK3" evidence="7 9">
    <location>
        <position position="349"/>
    </location>
</feature>
<feature type="modified residue" description="Phosphoserine; by RIPK3" evidence="9">
    <location>
        <position position="352"/>
    </location>
</feature>
<feature type="splice variant" id="VSP_052132" description="In isoform 2." evidence="14 15">
    <location>
        <begin position="449"/>
        <end position="456"/>
    </location>
</feature>
<feature type="mutagenesis site" description="Abolishes ATP-binding and induces necroptosis in absence of exogeous stimuli and independently of RIPK3." evidence="7">
    <original>K</original>
    <variation>M</variation>
    <location>
        <position position="219"/>
    </location>
</feature>
<feature type="mutagenesis site" description="Retains ATP-binding ability." evidence="7">
    <original>E</original>
    <variation>M</variation>
    <location>
        <position position="239"/>
    </location>
</feature>
<feature type="mutagenesis site" description="Impaired ability to induce necroptosis." evidence="7">
    <original>L</original>
    <variation>P</variation>
    <location>
        <position position="280"/>
    </location>
</feature>
<feature type="mutagenesis site" description="Retains ATP-binding ability and induces necroptosis in absence of exogeous stimuli and independently of RIPK3." evidence="7">
    <original>Q</original>
    <variation>A</variation>
    <location>
        <position position="343"/>
    </location>
</feature>
<feature type="mutagenesis site" description="Mimics phosphorylation state and induces necroptosis in absence of exogeous stimuli and independently of RIPK3.e." evidence="7">
    <original>S</original>
    <variation>D</variation>
    <location>
        <position position="345"/>
    </location>
</feature>
<feature type="mutagenesis site" description="No effect." evidence="7">
    <original>F</original>
    <variation>I</variation>
    <location>
        <position position="385"/>
    </location>
</feature>
<feature type="mutagenesis site" description="Impairs interaction with RIPK3." evidence="9">
    <original>SK</original>
    <variation>AA</variation>
    <location>
        <begin position="404"/>
        <end position="405"/>
    </location>
</feature>
<feature type="mutagenesis site" description="Impairs interaction with RIPK3." evidence="9">
    <original>S</original>
    <variation>A</variation>
    <location>
        <position position="404"/>
    </location>
</feature>
<feature type="helix" evidence="23">
    <location>
        <begin position="3"/>
        <end position="18"/>
    </location>
</feature>
<feature type="strand" evidence="23">
    <location>
        <begin position="22"/>
        <end position="24"/>
    </location>
</feature>
<feature type="helix" evidence="23">
    <location>
        <begin position="25"/>
        <end position="47"/>
    </location>
</feature>
<feature type="helix" evidence="23">
    <location>
        <begin position="55"/>
        <end position="77"/>
    </location>
</feature>
<feature type="helix" evidence="23">
    <location>
        <begin position="98"/>
        <end position="114"/>
    </location>
</feature>
<feature type="helix" evidence="23">
    <location>
        <begin position="132"/>
        <end position="154"/>
    </location>
</feature>
<feature type="helix" evidence="23">
    <location>
        <begin position="159"/>
        <end position="168"/>
    </location>
</feature>
<feature type="helix" evidence="24">
    <location>
        <begin position="188"/>
        <end position="190"/>
    </location>
</feature>
<feature type="strand" evidence="24">
    <location>
        <begin position="196"/>
        <end position="200"/>
    </location>
</feature>
<feature type="strand" evidence="24">
    <location>
        <begin position="202"/>
        <end position="211"/>
    </location>
</feature>
<feature type="strand" evidence="24">
    <location>
        <begin position="214"/>
        <end position="223"/>
    </location>
</feature>
<feature type="helix" evidence="24">
    <location>
        <begin position="229"/>
        <end position="242"/>
    </location>
</feature>
<feature type="strand" evidence="24">
    <location>
        <begin position="254"/>
        <end position="260"/>
    </location>
</feature>
<feature type="strand" evidence="24">
    <location>
        <begin position="263"/>
        <end position="265"/>
    </location>
</feature>
<feature type="strand" evidence="24">
    <location>
        <begin position="267"/>
        <end position="273"/>
    </location>
</feature>
<feature type="helix" evidence="24">
    <location>
        <begin position="280"/>
        <end position="286"/>
    </location>
</feature>
<feature type="helix" evidence="24">
    <location>
        <begin position="292"/>
        <end position="311"/>
    </location>
</feature>
<feature type="turn" evidence="24">
    <location>
        <begin position="321"/>
        <end position="323"/>
    </location>
</feature>
<feature type="strand" evidence="24">
    <location>
        <begin position="324"/>
        <end position="327"/>
    </location>
</feature>
<feature type="helix" evidence="24">
    <location>
        <begin position="328"/>
        <end position="330"/>
    </location>
</feature>
<feature type="strand" evidence="24">
    <location>
        <begin position="331"/>
        <end position="334"/>
    </location>
</feature>
<feature type="strand" evidence="24">
    <location>
        <begin position="336"/>
        <end position="339"/>
    </location>
</feature>
<feature type="helix" evidence="24">
    <location>
        <begin position="340"/>
        <end position="347"/>
    </location>
</feature>
<feature type="helix" evidence="24">
    <location>
        <begin position="359"/>
        <end position="362"/>
    </location>
</feature>
<feature type="helix" evidence="24">
    <location>
        <begin position="366"/>
        <end position="370"/>
    </location>
</feature>
<feature type="helix" evidence="24">
    <location>
        <begin position="378"/>
        <end position="394"/>
    </location>
</feature>
<feature type="turn" evidence="24">
    <location>
        <begin position="398"/>
        <end position="401"/>
    </location>
</feature>
<feature type="helix" evidence="24">
    <location>
        <begin position="404"/>
        <end position="412"/>
    </location>
</feature>
<feature type="strand" evidence="25">
    <location>
        <begin position="422"/>
        <end position="424"/>
    </location>
</feature>
<feature type="helix" evidence="24">
    <location>
        <begin position="426"/>
        <end position="435"/>
    </location>
</feature>
<feature type="helix" evidence="24">
    <location>
        <begin position="440"/>
        <end position="442"/>
    </location>
</feature>
<feature type="helix" evidence="24">
    <location>
        <begin position="457"/>
        <end position="462"/>
    </location>
</feature>
<dbReference type="EMBL" id="AK018636">
    <property type="protein sequence ID" value="BAB31320.1"/>
    <property type="molecule type" value="mRNA"/>
</dbReference>
<dbReference type="EMBL" id="AK170260">
    <property type="protein sequence ID" value="BAE41668.1"/>
    <property type="molecule type" value="mRNA"/>
</dbReference>
<dbReference type="EMBL" id="BC023755">
    <property type="protein sequence ID" value="AAH23755.1"/>
    <property type="molecule type" value="mRNA"/>
</dbReference>
<dbReference type="CCDS" id="CCDS52671.1">
    <molecule id="Q9D2Y4-2"/>
</dbReference>
<dbReference type="CCDS" id="CCDS80932.1">
    <molecule id="Q9D2Y4-1"/>
</dbReference>
<dbReference type="RefSeq" id="NP_001297542.1">
    <molecule id="Q9D2Y4-1"/>
    <property type="nucleotide sequence ID" value="NM_001310613.1"/>
</dbReference>
<dbReference type="RefSeq" id="NP_083281.1">
    <molecule id="Q9D2Y4-2"/>
    <property type="nucleotide sequence ID" value="NM_029005.3"/>
</dbReference>
<dbReference type="RefSeq" id="XP_006531505.1">
    <molecule id="Q9D2Y4-1"/>
    <property type="nucleotide sequence ID" value="XM_006531442.4"/>
</dbReference>
<dbReference type="RefSeq" id="XP_030099680.1">
    <molecule id="Q9D2Y4-2"/>
    <property type="nucleotide sequence ID" value="XM_030243820.2"/>
</dbReference>
<dbReference type="PDB" id="4BTF">
    <property type="method" value="X-ray"/>
    <property type="resolution" value="2.60 A"/>
    <property type="chains" value="A=1-472"/>
</dbReference>
<dbReference type="PDB" id="4M68">
    <property type="method" value="X-ray"/>
    <property type="resolution" value="1.70 A"/>
    <property type="chains" value="A=182-472"/>
</dbReference>
<dbReference type="PDB" id="4M69">
    <property type="method" value="X-ray"/>
    <property type="resolution" value="2.50 A"/>
    <property type="chains" value="B=182-472"/>
</dbReference>
<dbReference type="PDBsum" id="4BTF"/>
<dbReference type="PDBsum" id="4M68"/>
<dbReference type="PDBsum" id="4M69"/>
<dbReference type="SMR" id="Q9D2Y4"/>
<dbReference type="BioGRID" id="216850">
    <property type="interactions" value="8"/>
</dbReference>
<dbReference type="FunCoup" id="Q9D2Y4">
    <property type="interactions" value="532"/>
</dbReference>
<dbReference type="IntAct" id="Q9D2Y4">
    <property type="interactions" value="5"/>
</dbReference>
<dbReference type="MINT" id="Q9D2Y4"/>
<dbReference type="STRING" id="10090.ENSMUSP00000055521"/>
<dbReference type="BindingDB" id="Q9D2Y4"/>
<dbReference type="ChEMBL" id="CHEMBL5465354"/>
<dbReference type="GlyGen" id="Q9D2Y4">
    <property type="glycosylation" value="1 site, 1 O-linked glycan (1 site)"/>
</dbReference>
<dbReference type="iPTMnet" id="Q9D2Y4"/>
<dbReference type="PhosphoSitePlus" id="Q9D2Y4"/>
<dbReference type="PaxDb" id="10090-ENSMUSP00000055521"/>
<dbReference type="PeptideAtlas" id="Q9D2Y4"/>
<dbReference type="ProteomicsDB" id="290258">
    <molecule id="Q9D2Y4-1"/>
</dbReference>
<dbReference type="ProteomicsDB" id="290259">
    <molecule id="Q9D2Y4-2"/>
</dbReference>
<dbReference type="Pumba" id="Q9D2Y4"/>
<dbReference type="Antibodypedia" id="2097">
    <property type="antibodies" value="397 antibodies from 39 providers"/>
</dbReference>
<dbReference type="DNASU" id="74568"/>
<dbReference type="Ensembl" id="ENSMUST00000056157.14">
    <molecule id="Q9D2Y4-1"/>
    <property type="protein sequence ID" value="ENSMUSP00000055521.8"/>
    <property type="gene ID" value="ENSMUSG00000012519.15"/>
</dbReference>
<dbReference type="Ensembl" id="ENSMUST00000120432.3">
    <molecule id="Q9D2Y4-2"/>
    <property type="protein sequence ID" value="ENSMUSP00000113718.2"/>
    <property type="gene ID" value="ENSMUSG00000012519.15"/>
</dbReference>
<dbReference type="GeneID" id="74568"/>
<dbReference type="KEGG" id="mmu:74568"/>
<dbReference type="UCSC" id="uc009nmd.1">
    <molecule id="Q9D2Y4-2"/>
    <property type="organism name" value="mouse"/>
</dbReference>
<dbReference type="UCSC" id="uc009nme.1">
    <molecule id="Q9D2Y4-1"/>
    <property type="organism name" value="mouse"/>
</dbReference>
<dbReference type="AGR" id="MGI:1921818"/>
<dbReference type="CTD" id="197259"/>
<dbReference type="MGI" id="MGI:1921818">
    <property type="gene designation" value="Mlkl"/>
</dbReference>
<dbReference type="VEuPathDB" id="HostDB:ENSMUSG00000012519"/>
<dbReference type="eggNOG" id="KOG0192">
    <property type="taxonomic scope" value="Eukaryota"/>
</dbReference>
<dbReference type="GeneTree" id="ENSGT00390000016453"/>
<dbReference type="HOGENOM" id="CLU_044216_0_0_1"/>
<dbReference type="InParanoid" id="Q9D2Y4"/>
<dbReference type="OMA" id="ESKVDWM"/>
<dbReference type="OrthoDB" id="4062651at2759"/>
<dbReference type="PhylomeDB" id="Q9D2Y4"/>
<dbReference type="TreeFam" id="TF328453"/>
<dbReference type="Reactome" id="R-MMU-3295583">
    <property type="pathway name" value="TRP channels"/>
</dbReference>
<dbReference type="Reactome" id="R-MMU-5213460">
    <property type="pathway name" value="RIPK1-mediated regulated necrosis"/>
</dbReference>
<dbReference type="Reactome" id="R-MMU-5675482">
    <property type="pathway name" value="Regulation of necroptotic cell death"/>
</dbReference>
<dbReference type="BioGRID-ORCS" id="74568">
    <property type="hits" value="1 hit in 82 CRISPR screens"/>
</dbReference>
<dbReference type="ChiTaRS" id="Mlkl">
    <property type="organism name" value="mouse"/>
</dbReference>
<dbReference type="EvolutionaryTrace" id="Q9D2Y4"/>
<dbReference type="PRO" id="PR:Q9D2Y4"/>
<dbReference type="Proteomes" id="UP000000589">
    <property type="component" value="Chromosome 8"/>
</dbReference>
<dbReference type="RNAct" id="Q9D2Y4">
    <property type="molecule type" value="protein"/>
</dbReference>
<dbReference type="Bgee" id="ENSMUSG00000012519">
    <property type="expression patterns" value="Expressed in bone marrow and 96 other cell types or tissues"/>
</dbReference>
<dbReference type="ExpressionAtlas" id="Q9D2Y4">
    <property type="expression patterns" value="baseline and differential"/>
</dbReference>
<dbReference type="GO" id="GO:0030054">
    <property type="term" value="C:cell junction"/>
    <property type="evidence" value="ECO:0007669"/>
    <property type="project" value="Ensembl"/>
</dbReference>
<dbReference type="GO" id="GO:0005737">
    <property type="term" value="C:cytoplasm"/>
    <property type="evidence" value="ECO:0000314"/>
    <property type="project" value="UniProtKB"/>
</dbReference>
<dbReference type="GO" id="GO:0005829">
    <property type="term" value="C:cytosol"/>
    <property type="evidence" value="ECO:0007669"/>
    <property type="project" value="Ensembl"/>
</dbReference>
<dbReference type="GO" id="GO:0005634">
    <property type="term" value="C:nucleus"/>
    <property type="evidence" value="ECO:0000314"/>
    <property type="project" value="UniProtKB"/>
</dbReference>
<dbReference type="GO" id="GO:0005886">
    <property type="term" value="C:plasma membrane"/>
    <property type="evidence" value="ECO:0000314"/>
    <property type="project" value="UniProtKB"/>
</dbReference>
<dbReference type="GO" id="GO:0005524">
    <property type="term" value="F:ATP binding"/>
    <property type="evidence" value="ECO:0000314"/>
    <property type="project" value="UniProtKB"/>
</dbReference>
<dbReference type="GO" id="GO:0019901">
    <property type="term" value="F:protein kinase binding"/>
    <property type="evidence" value="ECO:0000353"/>
    <property type="project" value="UniProtKB"/>
</dbReference>
<dbReference type="GO" id="GO:0044877">
    <property type="term" value="F:protein-containing complex binding"/>
    <property type="evidence" value="ECO:0007669"/>
    <property type="project" value="Ensembl"/>
</dbReference>
<dbReference type="GO" id="GO:0007166">
    <property type="term" value="P:cell surface receptor signaling pathway"/>
    <property type="evidence" value="ECO:0007669"/>
    <property type="project" value="InterPro"/>
</dbReference>
<dbReference type="GO" id="GO:0051607">
    <property type="term" value="P:defense response to virus"/>
    <property type="evidence" value="ECO:0000314"/>
    <property type="project" value="UniProtKB"/>
</dbReference>
<dbReference type="GO" id="GO:0097528">
    <property type="term" value="P:execution phase of necroptosis"/>
    <property type="evidence" value="ECO:0000314"/>
    <property type="project" value="UniProtKB"/>
</dbReference>
<dbReference type="GO" id="GO:0070266">
    <property type="term" value="P:necroptotic process"/>
    <property type="evidence" value="ECO:0000315"/>
    <property type="project" value="UniProtKB"/>
</dbReference>
<dbReference type="GO" id="GO:0097527">
    <property type="term" value="P:necroptotic signaling pathway"/>
    <property type="evidence" value="ECO:0000315"/>
    <property type="project" value="UniProtKB"/>
</dbReference>
<dbReference type="GO" id="GO:0070207">
    <property type="term" value="P:protein homotrimerization"/>
    <property type="evidence" value="ECO:0000250"/>
    <property type="project" value="UniProtKB"/>
</dbReference>
<dbReference type="CDD" id="cd21037">
    <property type="entry name" value="MLKL_NTD"/>
    <property type="match status" value="1"/>
</dbReference>
<dbReference type="FunFam" id="1.10.510.10:FF:000663">
    <property type="entry name" value="Mixed lineage kinase domain-like pseudokinase"/>
    <property type="match status" value="1"/>
</dbReference>
<dbReference type="FunFam" id="1.20.930.20:FF:000005">
    <property type="entry name" value="Mixed lineage kinase domain-like pseudokinase"/>
    <property type="match status" value="1"/>
</dbReference>
<dbReference type="FunFam" id="3.30.200.20:FF:000437">
    <property type="entry name" value="Mixed lineage kinase domain-like pseudokinase"/>
    <property type="match status" value="1"/>
</dbReference>
<dbReference type="Gene3D" id="1.20.930.20">
    <property type="entry name" value="Adaptor protein Cbl, N-terminal domain"/>
    <property type="match status" value="1"/>
</dbReference>
<dbReference type="Gene3D" id="3.30.200.20">
    <property type="entry name" value="Phosphorylase Kinase, domain 1"/>
    <property type="match status" value="1"/>
</dbReference>
<dbReference type="Gene3D" id="1.10.510.10">
    <property type="entry name" value="Transferase(Phosphotransferase) domain 1"/>
    <property type="match status" value="1"/>
</dbReference>
<dbReference type="InterPro" id="IPR036537">
    <property type="entry name" value="Adaptor_Cbl_N_dom_sf"/>
</dbReference>
<dbReference type="InterPro" id="IPR011009">
    <property type="entry name" value="Kinase-like_dom_sf"/>
</dbReference>
<dbReference type="InterPro" id="IPR054000">
    <property type="entry name" value="MLKL_N"/>
</dbReference>
<dbReference type="InterPro" id="IPR000719">
    <property type="entry name" value="Prot_kinase_dom"/>
</dbReference>
<dbReference type="InterPro" id="IPR001245">
    <property type="entry name" value="Ser-Thr/Tyr_kinase_cat_dom"/>
</dbReference>
<dbReference type="InterPro" id="IPR051681">
    <property type="entry name" value="Ser/Thr_Kinases-Pseudokinases"/>
</dbReference>
<dbReference type="PANTHER" id="PTHR44329:SF298">
    <property type="entry name" value="MIXED LINEAGE KINASE DOMAIN-LIKE PROTEIN"/>
    <property type="match status" value="1"/>
</dbReference>
<dbReference type="PANTHER" id="PTHR44329">
    <property type="entry name" value="SERINE/THREONINE-PROTEIN KINASE TNNI3K-RELATED"/>
    <property type="match status" value="1"/>
</dbReference>
<dbReference type="Pfam" id="PF22215">
    <property type="entry name" value="MLKL_N"/>
    <property type="match status" value="1"/>
</dbReference>
<dbReference type="Pfam" id="PF07714">
    <property type="entry name" value="PK_Tyr_Ser-Thr"/>
    <property type="match status" value="1"/>
</dbReference>
<dbReference type="SUPFAM" id="SSF56112">
    <property type="entry name" value="Protein kinase-like (PK-like)"/>
    <property type="match status" value="1"/>
</dbReference>
<dbReference type="PROSITE" id="PS50011">
    <property type="entry name" value="PROTEIN_KINASE_DOM"/>
    <property type="match status" value="1"/>
</dbReference>
<protein>
    <recommendedName>
        <fullName evidence="17">Mixed lineage kinase domain-like protein</fullName>
    </recommendedName>
</protein>
<sequence length="472" mass="54317">MDKLGQIIKLGQLIYEQCEKMKYCRKQCQRLGNRVHGLLQPLQRLQAQGKKNLPDDITAALGRFDEVLKEANQQIEKFSKKSHIWKFVSVGNDKILFHEVNEKLRDVWEELLLLLQVYHWNTVSDVSQPASWQQEDRQDAEEDGNENMKVILMQLQISVEEINKTLKQCSLKPTQEIPQDLQIKEIPKEHLGPPWTKLKTSKMSTIYRGEYHRSPVTIKVFNNPQAESVGIVRFTFNDEIKTMKKFDSPNILRIFGICIDQTVKPPEFSIVMEYCELGTLRELLDREKDLTMSVRSLLVLRAARGLYRLHHSETLHRNISSSSFLVAGGYQVKLAGFELSKTQNSISRTAKSTKAERSSSTIYVSPERLKNPFCLYDIKAEIYSFGIVLWEIATGKIPFEGCDSKKIRELVAEDKKQEPVGQDCPELLREIINECRAHEPSQRPSVDGRSLSGRERILERLSAVEESTDKKV</sequence>
<reference evidence="17 21" key="1">
    <citation type="journal article" date="2005" name="Science">
        <title>The transcriptional landscape of the mammalian genome.</title>
        <authorList>
            <person name="Carninci P."/>
            <person name="Kasukawa T."/>
            <person name="Katayama S."/>
            <person name="Gough J."/>
            <person name="Frith M.C."/>
            <person name="Maeda N."/>
            <person name="Oyama R."/>
            <person name="Ravasi T."/>
            <person name="Lenhard B."/>
            <person name="Wells C."/>
            <person name="Kodzius R."/>
            <person name="Shimokawa K."/>
            <person name="Bajic V.B."/>
            <person name="Brenner S.E."/>
            <person name="Batalov S."/>
            <person name="Forrest A.R."/>
            <person name="Zavolan M."/>
            <person name="Davis M.J."/>
            <person name="Wilming L.G."/>
            <person name="Aidinis V."/>
            <person name="Allen J.E."/>
            <person name="Ambesi-Impiombato A."/>
            <person name="Apweiler R."/>
            <person name="Aturaliya R.N."/>
            <person name="Bailey T.L."/>
            <person name="Bansal M."/>
            <person name="Baxter L."/>
            <person name="Beisel K.W."/>
            <person name="Bersano T."/>
            <person name="Bono H."/>
            <person name="Chalk A.M."/>
            <person name="Chiu K.P."/>
            <person name="Choudhary V."/>
            <person name="Christoffels A."/>
            <person name="Clutterbuck D.R."/>
            <person name="Crowe M.L."/>
            <person name="Dalla E."/>
            <person name="Dalrymple B.P."/>
            <person name="de Bono B."/>
            <person name="Della Gatta G."/>
            <person name="di Bernardo D."/>
            <person name="Down T."/>
            <person name="Engstrom P."/>
            <person name="Fagiolini M."/>
            <person name="Faulkner G."/>
            <person name="Fletcher C.F."/>
            <person name="Fukushima T."/>
            <person name="Furuno M."/>
            <person name="Futaki S."/>
            <person name="Gariboldi M."/>
            <person name="Georgii-Hemming P."/>
            <person name="Gingeras T.R."/>
            <person name="Gojobori T."/>
            <person name="Green R.E."/>
            <person name="Gustincich S."/>
            <person name="Harbers M."/>
            <person name="Hayashi Y."/>
            <person name="Hensch T.K."/>
            <person name="Hirokawa N."/>
            <person name="Hill D."/>
            <person name="Huminiecki L."/>
            <person name="Iacono M."/>
            <person name="Ikeo K."/>
            <person name="Iwama A."/>
            <person name="Ishikawa T."/>
            <person name="Jakt M."/>
            <person name="Kanapin A."/>
            <person name="Katoh M."/>
            <person name="Kawasawa Y."/>
            <person name="Kelso J."/>
            <person name="Kitamura H."/>
            <person name="Kitano H."/>
            <person name="Kollias G."/>
            <person name="Krishnan S.P."/>
            <person name="Kruger A."/>
            <person name="Kummerfeld S.K."/>
            <person name="Kurochkin I.V."/>
            <person name="Lareau L.F."/>
            <person name="Lazarevic D."/>
            <person name="Lipovich L."/>
            <person name="Liu J."/>
            <person name="Liuni S."/>
            <person name="McWilliam S."/>
            <person name="Madan Babu M."/>
            <person name="Madera M."/>
            <person name="Marchionni L."/>
            <person name="Matsuda H."/>
            <person name="Matsuzawa S."/>
            <person name="Miki H."/>
            <person name="Mignone F."/>
            <person name="Miyake S."/>
            <person name="Morris K."/>
            <person name="Mottagui-Tabar S."/>
            <person name="Mulder N."/>
            <person name="Nakano N."/>
            <person name="Nakauchi H."/>
            <person name="Ng P."/>
            <person name="Nilsson R."/>
            <person name="Nishiguchi S."/>
            <person name="Nishikawa S."/>
            <person name="Nori F."/>
            <person name="Ohara O."/>
            <person name="Okazaki Y."/>
            <person name="Orlando V."/>
            <person name="Pang K.C."/>
            <person name="Pavan W.J."/>
            <person name="Pavesi G."/>
            <person name="Pesole G."/>
            <person name="Petrovsky N."/>
            <person name="Piazza S."/>
            <person name="Reed J."/>
            <person name="Reid J.F."/>
            <person name="Ring B.Z."/>
            <person name="Ringwald M."/>
            <person name="Rost B."/>
            <person name="Ruan Y."/>
            <person name="Salzberg S.L."/>
            <person name="Sandelin A."/>
            <person name="Schneider C."/>
            <person name="Schoenbach C."/>
            <person name="Sekiguchi K."/>
            <person name="Semple C.A."/>
            <person name="Seno S."/>
            <person name="Sessa L."/>
            <person name="Sheng Y."/>
            <person name="Shibata Y."/>
            <person name="Shimada H."/>
            <person name="Shimada K."/>
            <person name="Silva D."/>
            <person name="Sinclair B."/>
            <person name="Sperling S."/>
            <person name="Stupka E."/>
            <person name="Sugiura K."/>
            <person name="Sultana R."/>
            <person name="Takenaka Y."/>
            <person name="Taki K."/>
            <person name="Tammoja K."/>
            <person name="Tan S.L."/>
            <person name="Tang S."/>
            <person name="Taylor M.S."/>
            <person name="Tegner J."/>
            <person name="Teichmann S.A."/>
            <person name="Ueda H.R."/>
            <person name="van Nimwegen E."/>
            <person name="Verardo R."/>
            <person name="Wei C.L."/>
            <person name="Yagi K."/>
            <person name="Yamanishi H."/>
            <person name="Zabarovsky E."/>
            <person name="Zhu S."/>
            <person name="Zimmer A."/>
            <person name="Hide W."/>
            <person name="Bult C."/>
            <person name="Grimmond S.M."/>
            <person name="Teasdale R.D."/>
            <person name="Liu E.T."/>
            <person name="Brusic V."/>
            <person name="Quackenbush J."/>
            <person name="Wahlestedt C."/>
            <person name="Mattick J.S."/>
            <person name="Hume D.A."/>
            <person name="Kai C."/>
            <person name="Sasaki D."/>
            <person name="Tomaru Y."/>
            <person name="Fukuda S."/>
            <person name="Kanamori-Katayama M."/>
            <person name="Suzuki M."/>
            <person name="Aoki J."/>
            <person name="Arakawa T."/>
            <person name="Iida J."/>
            <person name="Imamura K."/>
            <person name="Itoh M."/>
            <person name="Kato T."/>
            <person name="Kawaji H."/>
            <person name="Kawagashira N."/>
            <person name="Kawashima T."/>
            <person name="Kojima M."/>
            <person name="Kondo S."/>
            <person name="Konno H."/>
            <person name="Nakano K."/>
            <person name="Ninomiya N."/>
            <person name="Nishio T."/>
            <person name="Okada M."/>
            <person name="Plessy C."/>
            <person name="Shibata K."/>
            <person name="Shiraki T."/>
            <person name="Suzuki S."/>
            <person name="Tagami M."/>
            <person name="Waki K."/>
            <person name="Watahiki A."/>
            <person name="Okamura-Oho Y."/>
            <person name="Suzuki H."/>
            <person name="Kawai J."/>
            <person name="Hayashizaki Y."/>
        </authorList>
    </citation>
    <scope>NUCLEOTIDE SEQUENCE [LARGE SCALE MRNA] (ISOFORMS 1 AND 2)</scope>
    <source>
        <strain evidence="20">C57BL/6J</strain>
        <strain evidence="21">NOD</strain>
        <tissue evidence="20">Cecum</tissue>
        <tissue evidence="21">Dendritic cell</tissue>
    </source>
</reference>
<reference evidence="17 19" key="2">
    <citation type="journal article" date="2004" name="Genome Res.">
        <title>The status, quality, and expansion of the NIH full-length cDNA project: the Mammalian Gene Collection (MGC).</title>
        <authorList>
            <consortium name="The MGC Project Team"/>
        </authorList>
    </citation>
    <scope>NUCLEOTIDE SEQUENCE [LARGE SCALE MRNA] (ISOFORM 2)</scope>
    <source>
        <strain evidence="19">FVB/N</strain>
        <tissue evidence="19">Mammary gland</tissue>
    </source>
</reference>
<reference key="3">
    <citation type="journal article" date="2010" name="Cell">
        <title>A tissue-specific atlas of mouse protein phosphorylation and expression.</title>
        <authorList>
            <person name="Huttlin E.L."/>
            <person name="Jedrychowski M.P."/>
            <person name="Elias J.E."/>
            <person name="Goswami T."/>
            <person name="Rad R."/>
            <person name="Beausoleil S.A."/>
            <person name="Villen J."/>
            <person name="Haas W."/>
            <person name="Sowa M.E."/>
            <person name="Gygi S.P."/>
        </authorList>
    </citation>
    <scope>IDENTIFICATION BY MASS SPECTROMETRY [LARGE SCALE ANALYSIS]</scope>
    <source>
        <tissue>Heart</tissue>
        <tissue>Spleen</tissue>
    </source>
</reference>
<reference key="4">
    <citation type="journal article" date="2012" name="Cell">
        <title>Mixed lineage kinase domain-like protein mediates necrosis signaling downstream of RIP3 kinase.</title>
        <authorList>
            <person name="Sun L."/>
            <person name="Wang H."/>
            <person name="Wang Z."/>
            <person name="He S."/>
            <person name="Chen S."/>
            <person name="Liao D."/>
            <person name="Wang L."/>
            <person name="Yan J."/>
            <person name="Liu W."/>
            <person name="Lei X."/>
            <person name="Wang X."/>
        </authorList>
    </citation>
    <scope>INTERACTION WITH RIPK3</scope>
</reference>
<reference key="5">
    <citation type="journal article" date="2013" name="Cell Res.">
        <title>Mlkl knockout mice demonstrate the indispensable role of Mlkl in necroptosis.</title>
        <authorList>
            <person name="Wu J."/>
            <person name="Huang Z."/>
            <person name="Ren J."/>
            <person name="Zhang Z."/>
            <person name="He P."/>
            <person name="Li Y."/>
            <person name="Ma J."/>
            <person name="Chen W."/>
            <person name="Zhang Y."/>
            <person name="Zhou X."/>
            <person name="Yang Z."/>
            <person name="Wu S.Q."/>
            <person name="Chen L."/>
            <person name="Han J."/>
        </authorList>
    </citation>
    <scope>TISSUE SPECIFICITY</scope>
    <scope>DISRUPTION PHENOTYPE</scope>
    <scope>FUNCTION</scope>
</reference>
<reference key="6">
    <citation type="journal article" date="2013" name="J. Biol. Chem.">
        <title>Toll-like receptor 3-mediated necrosis via TRIF, RIP3, and MLKL.</title>
        <authorList>
            <person name="Kaiser W.J."/>
            <person name="Sridharan H."/>
            <person name="Huang C."/>
            <person name="Mandal P."/>
            <person name="Upton J.W."/>
            <person name="Gough P.J."/>
            <person name="Sehon C.A."/>
            <person name="Marquis R.W."/>
            <person name="Bertin J."/>
            <person name="Mocarski E.S."/>
        </authorList>
    </citation>
    <scope>FUNCTION</scope>
</reference>
<reference key="7">
    <citation type="journal article" date="2013" name="J. Biol. Chem.">
        <title>Diverse sequence determinants control human and mouse receptor interacting protein 3 (RIP3) and mixed lineage kinase domain-like (MLKL) interaction in necroptotic signaling.</title>
        <authorList>
            <person name="Chen W."/>
            <person name="Zhou Z."/>
            <person name="Li L."/>
            <person name="Zhong C.Q."/>
            <person name="Zheng X."/>
            <person name="Wu X."/>
            <person name="Zhang Y."/>
            <person name="Ma H."/>
            <person name="Huang D."/>
            <person name="Li W."/>
            <person name="Xia Z."/>
            <person name="Han J."/>
        </authorList>
    </citation>
    <scope>INTERACTION WITH RIPK3</scope>
</reference>
<reference key="8">
    <citation type="journal article" date="2016" name="Cell Host Microbe">
        <title>RIPK3 activates parallel pathways of MLKL-driven necroptosis and FADD-mediated apoptosis to protect against influenza A virus.</title>
        <authorList>
            <person name="Nogusa S."/>
            <person name="Thapa R.J."/>
            <person name="Dillon C.P."/>
            <person name="Liedmann S."/>
            <person name="Oguin T.H. III"/>
            <person name="Ingram J.P."/>
            <person name="Rodriguez D.A."/>
            <person name="Kosoff R."/>
            <person name="Sharma S."/>
            <person name="Sturm O."/>
            <person name="Verbist K."/>
            <person name="Gough P.J."/>
            <person name="Bertin J."/>
            <person name="Hartmann B.M."/>
            <person name="Sealfon S.C."/>
            <person name="Kaiser W.J."/>
            <person name="Mocarski E.S."/>
            <person name="Lopez C.B."/>
            <person name="Thomas P.G."/>
            <person name="Oberst A."/>
            <person name="Green D.R."/>
            <person name="Balachandran S."/>
        </authorList>
    </citation>
    <scope>FUNCTION</scope>
    <scope>INTERACTION WITH RIPK3</scope>
    <scope>DISRUPTION PHENOTYPE</scope>
</reference>
<reference key="9">
    <citation type="journal article" date="2016" name="Nature">
        <title>RIPK1 counteracts ZBP1-mediated necroptosis to inhibit inflammation.</title>
        <authorList>
            <person name="Lin J."/>
            <person name="Kumari S."/>
            <person name="Kim C."/>
            <person name="Van T.M."/>
            <person name="Wachsmuth L."/>
            <person name="Polykratis A."/>
            <person name="Pasparakis M."/>
        </authorList>
    </citation>
    <scope>DISRUPTION PHENOTYPE</scope>
</reference>
<reference key="10">
    <citation type="journal article" date="2020" name="Cell">
        <title>Influenza virus Z-RNAs induce ZBP1-mediated necroptosis.</title>
        <authorList>
            <person name="Zhang T."/>
            <person name="Yin C."/>
            <person name="Boyd D.F."/>
            <person name="Quarato G."/>
            <person name="Ingram J.P."/>
            <person name="Shubina M."/>
            <person name="Ragan K.B."/>
            <person name="Ishizuka T."/>
            <person name="Crawford J.C."/>
            <person name="Tummers B."/>
            <person name="Rodriguez D.A."/>
            <person name="Xue J."/>
            <person name="Peri S."/>
            <person name="Kaiser W.J."/>
            <person name="Lopez C.B."/>
            <person name="Xu Y."/>
            <person name="Upton J.W."/>
            <person name="Thomas P.G."/>
            <person name="Green D.R."/>
            <person name="Balachandran S."/>
        </authorList>
    </citation>
    <scope>FUNCTION</scope>
    <scope>PHOSPHORYLATION BY RIPK3</scope>
    <scope>SUBCELLULAR LOCATION</scope>
    <scope>DISRUPTION PHENOTYPE</scope>
</reference>
<reference key="11">
    <citation type="journal article" date="2020" name="Nature">
        <title>Z-nucleic-acid sensing triggers ZBP1-dependent necroptosis and inflammation.</title>
        <authorList>
            <person name="Jiao H."/>
            <person name="Wachsmuth L."/>
            <person name="Kumari S."/>
            <person name="Schwarzer R."/>
            <person name="Lin J."/>
            <person name="Eren R.O."/>
            <person name="Fisher A."/>
            <person name="Lane R."/>
            <person name="Young G.R."/>
            <person name="Kassiotis G."/>
            <person name="Kaiser W.J."/>
            <person name="Pasparakis M."/>
        </authorList>
    </citation>
    <scope>FUNCTION</scope>
    <scope>PHOSPHORYLATION BY RIPK3</scope>
    <scope>SUBCELLULAR LOCATION</scope>
</reference>
<reference key="12">
    <citation type="journal article" date="2013" name="Cell Rep.">
        <title>Structural insights into RIP3-mediated necroptotic signaling.</title>
        <authorList>
            <person name="Xie T."/>
            <person name="Peng W."/>
            <person name="Yan C."/>
            <person name="Wu J."/>
            <person name="Gong X."/>
            <person name="Shi Y."/>
        </authorList>
    </citation>
    <scope>X-RAY CRYSTALLOGRAPHY (1.7 ANGSTROMS) OF 182-472 IN COMPLEX WITH RIPK3</scope>
    <scope>INTERACTION WITH RIPK3</scope>
    <scope>PHOSPHORYLATION AT SER-345; SER-347; THR-349 AND SER-352</scope>
    <scope>MUTAGENESIS OF SER-404 AND 404-SER-LYS-405</scope>
</reference>
<reference key="13">
    <citation type="journal article" date="2013" name="Immunity">
        <title>The pseudokinase MLKL mediates necroptosis via a molecular switch mechanism.</title>
        <authorList>
            <person name="Murphy J.M."/>
            <person name="Czabotar P.E."/>
            <person name="Hildebrand J.M."/>
            <person name="Lucet I.S."/>
            <person name="Zhang J.G."/>
            <person name="Alvarez-Diaz S."/>
            <person name="Lewis R."/>
            <person name="Lalaoui N."/>
            <person name="Metcalf D."/>
            <person name="Webb A.I."/>
            <person name="Young S.N."/>
            <person name="Varghese L.N."/>
            <person name="Tannahill G.M."/>
            <person name="Hatchell E.C."/>
            <person name="Majewski I.J."/>
            <person name="Okamoto T."/>
            <person name="Dobson R.C."/>
            <person name="Hilton D.J."/>
            <person name="Babon J.J."/>
            <person name="Nicola N.A."/>
            <person name="Strasser A."/>
            <person name="Silke J."/>
            <person name="Alexander W.S."/>
        </authorList>
    </citation>
    <scope>X-RAY CRYSTALLOGRAPHY (2.6 ANGSTROMS)</scope>
    <scope>ATP-BINDING</scope>
    <scope>INTERACTION WITH RIPK3</scope>
    <scope>PHOSPHORYLATION AT SER-345; SER-347 AND THR-349</scope>
    <scope>MUTAGENESIS OF LYS-219; GLU-239; LEU-280; GLN-343; SER-345 AND PHE-385</scope>
    <scope>DISRUPTION PHENOTYPE</scope>
    <scope>FUNCTION</scope>
</reference>
<keyword id="KW-0002">3D-structure</keyword>
<keyword id="KW-0025">Alternative splicing</keyword>
<keyword id="KW-0067">ATP-binding</keyword>
<keyword id="KW-1003">Cell membrane</keyword>
<keyword id="KW-0175">Coiled coil</keyword>
<keyword id="KW-0963">Cytoplasm</keyword>
<keyword id="KW-0472">Membrane</keyword>
<keyword id="KW-1210">Necrosis</keyword>
<keyword id="KW-0547">Nucleotide-binding</keyword>
<keyword id="KW-0539">Nucleus</keyword>
<keyword id="KW-0597">Phosphoprotein</keyword>
<keyword id="KW-1185">Reference proteome</keyword>
<proteinExistence type="evidence at protein level"/>
<gene>
    <name evidence="16 22" type="primary">Mlkl</name>
</gene>
<accession>Q9D2Y4</accession>
<accession>Q8CIJ5</accession>
<evidence type="ECO:0000250" key="1">
    <source>
        <dbReference type="UniProtKB" id="Q8NB16"/>
    </source>
</evidence>
<evidence type="ECO:0000255" key="2"/>
<evidence type="ECO:0000255" key="3">
    <source>
        <dbReference type="PROSITE-ProRule" id="PRU00159"/>
    </source>
</evidence>
<evidence type="ECO:0000269" key="4">
    <source>
    </source>
</evidence>
<evidence type="ECO:0000269" key="5">
    <source>
    </source>
</evidence>
<evidence type="ECO:0000269" key="6">
    <source>
    </source>
</evidence>
<evidence type="ECO:0000269" key="7">
    <source>
    </source>
</evidence>
<evidence type="ECO:0000269" key="8">
    <source>
    </source>
</evidence>
<evidence type="ECO:0000269" key="9">
    <source>
    </source>
</evidence>
<evidence type="ECO:0000269" key="10">
    <source>
    </source>
</evidence>
<evidence type="ECO:0000269" key="11">
    <source>
    </source>
</evidence>
<evidence type="ECO:0000269" key="12">
    <source>
    </source>
</evidence>
<evidence type="ECO:0000269" key="13">
    <source>
    </source>
</evidence>
<evidence type="ECO:0000303" key="14">
    <source>
    </source>
</evidence>
<evidence type="ECO:0000303" key="15">
    <source>
    </source>
</evidence>
<evidence type="ECO:0000303" key="16">
    <source>
    </source>
</evidence>
<evidence type="ECO:0000305" key="17"/>
<evidence type="ECO:0000305" key="18">
    <source>
    </source>
</evidence>
<evidence type="ECO:0000312" key="19">
    <source>
        <dbReference type="EMBL" id="AAH23755.1"/>
    </source>
</evidence>
<evidence type="ECO:0000312" key="20">
    <source>
        <dbReference type="EMBL" id="BAB31320.1"/>
    </source>
</evidence>
<evidence type="ECO:0000312" key="21">
    <source>
        <dbReference type="EMBL" id="BAE41668.1"/>
    </source>
</evidence>
<evidence type="ECO:0000312" key="22">
    <source>
        <dbReference type="MGI" id="MGI:1921818"/>
    </source>
</evidence>
<evidence type="ECO:0007829" key="23">
    <source>
        <dbReference type="PDB" id="4BTF"/>
    </source>
</evidence>
<evidence type="ECO:0007829" key="24">
    <source>
        <dbReference type="PDB" id="4M68"/>
    </source>
</evidence>
<evidence type="ECO:0007829" key="25">
    <source>
        <dbReference type="PDB" id="4M69"/>
    </source>
</evidence>
<name>MLKL_MOUSE</name>